<proteinExistence type="inferred from homology"/>
<feature type="chain" id="PRO_0000302286" description="Large ribosomal subunit protein bL36">
    <location>
        <begin position="1"/>
        <end position="41"/>
    </location>
</feature>
<gene>
    <name evidence="1" type="primary">rpmJ</name>
    <name type="ordered locus">RPB_1418</name>
</gene>
<accession>Q2J082</accession>
<organism>
    <name type="scientific">Rhodopseudomonas palustris (strain HaA2)</name>
    <dbReference type="NCBI Taxonomy" id="316058"/>
    <lineage>
        <taxon>Bacteria</taxon>
        <taxon>Pseudomonadati</taxon>
        <taxon>Pseudomonadota</taxon>
        <taxon>Alphaproteobacteria</taxon>
        <taxon>Hyphomicrobiales</taxon>
        <taxon>Nitrobacteraceae</taxon>
        <taxon>Rhodopseudomonas</taxon>
    </lineage>
</organism>
<protein>
    <recommendedName>
        <fullName evidence="1">Large ribosomal subunit protein bL36</fullName>
    </recommendedName>
    <alternativeName>
        <fullName evidence="2">50S ribosomal protein L36</fullName>
    </alternativeName>
</protein>
<comment type="similarity">
    <text evidence="1">Belongs to the bacterial ribosomal protein bL36 family.</text>
</comment>
<sequence>MKVRNSLKSLRARHRDNRLVRRKGRLYVINKVQRRFKARQG</sequence>
<dbReference type="EMBL" id="CP000250">
    <property type="protein sequence ID" value="ABD06128.1"/>
    <property type="molecule type" value="Genomic_DNA"/>
</dbReference>
<dbReference type="RefSeq" id="WP_011440316.1">
    <property type="nucleotide sequence ID" value="NC_007778.1"/>
</dbReference>
<dbReference type="SMR" id="Q2J082"/>
<dbReference type="STRING" id="316058.RPB_1418"/>
<dbReference type="KEGG" id="rpb:RPB_1418"/>
<dbReference type="eggNOG" id="COG0257">
    <property type="taxonomic scope" value="Bacteria"/>
</dbReference>
<dbReference type="HOGENOM" id="CLU_135723_3_0_5"/>
<dbReference type="OrthoDB" id="9801558at2"/>
<dbReference type="Proteomes" id="UP000008809">
    <property type="component" value="Chromosome"/>
</dbReference>
<dbReference type="GO" id="GO:1990904">
    <property type="term" value="C:ribonucleoprotein complex"/>
    <property type="evidence" value="ECO:0007669"/>
    <property type="project" value="UniProtKB-KW"/>
</dbReference>
<dbReference type="GO" id="GO:0005840">
    <property type="term" value="C:ribosome"/>
    <property type="evidence" value="ECO:0007669"/>
    <property type="project" value="UniProtKB-KW"/>
</dbReference>
<dbReference type="GO" id="GO:0003735">
    <property type="term" value="F:structural constituent of ribosome"/>
    <property type="evidence" value="ECO:0007669"/>
    <property type="project" value="InterPro"/>
</dbReference>
<dbReference type="GO" id="GO:0006412">
    <property type="term" value="P:translation"/>
    <property type="evidence" value="ECO:0007669"/>
    <property type="project" value="UniProtKB-UniRule"/>
</dbReference>
<dbReference type="HAMAP" id="MF_00251">
    <property type="entry name" value="Ribosomal_bL36"/>
    <property type="match status" value="1"/>
</dbReference>
<dbReference type="InterPro" id="IPR000473">
    <property type="entry name" value="Ribosomal_bL36"/>
</dbReference>
<dbReference type="InterPro" id="IPR035977">
    <property type="entry name" value="Ribosomal_bL36_sp"/>
</dbReference>
<dbReference type="InterPro" id="IPR047621">
    <property type="entry name" value="Ribosomal_L36_bact"/>
</dbReference>
<dbReference type="NCBIfam" id="NF002021">
    <property type="entry name" value="PRK00831.1"/>
    <property type="match status" value="1"/>
</dbReference>
<dbReference type="NCBIfam" id="TIGR01022">
    <property type="entry name" value="rpmJ_bact"/>
    <property type="match status" value="1"/>
</dbReference>
<dbReference type="PANTHER" id="PTHR47781">
    <property type="entry name" value="50S RIBOSOMAL PROTEIN L36 2"/>
    <property type="match status" value="1"/>
</dbReference>
<dbReference type="PANTHER" id="PTHR47781:SF1">
    <property type="entry name" value="LARGE RIBOSOMAL SUBUNIT PROTEIN BL36B"/>
    <property type="match status" value="1"/>
</dbReference>
<dbReference type="Pfam" id="PF00444">
    <property type="entry name" value="Ribosomal_L36"/>
    <property type="match status" value="1"/>
</dbReference>
<dbReference type="SUPFAM" id="SSF57840">
    <property type="entry name" value="Ribosomal protein L36"/>
    <property type="match status" value="1"/>
</dbReference>
<dbReference type="PROSITE" id="PS00828">
    <property type="entry name" value="RIBOSOMAL_L36"/>
    <property type="match status" value="1"/>
</dbReference>
<name>RL36_RHOP2</name>
<evidence type="ECO:0000255" key="1">
    <source>
        <dbReference type="HAMAP-Rule" id="MF_00251"/>
    </source>
</evidence>
<evidence type="ECO:0000305" key="2"/>
<reference key="1">
    <citation type="submission" date="2006-01" db="EMBL/GenBank/DDBJ databases">
        <title>Complete sequence of Rhodopseudomonas palustris HaA2.</title>
        <authorList>
            <consortium name="US DOE Joint Genome Institute"/>
            <person name="Copeland A."/>
            <person name="Lucas S."/>
            <person name="Lapidus A."/>
            <person name="Barry K."/>
            <person name="Detter J.C."/>
            <person name="Glavina T."/>
            <person name="Hammon N."/>
            <person name="Israni S."/>
            <person name="Pitluck S."/>
            <person name="Chain P."/>
            <person name="Malfatti S."/>
            <person name="Shin M."/>
            <person name="Vergez L."/>
            <person name="Schmutz J."/>
            <person name="Larimer F."/>
            <person name="Land M."/>
            <person name="Hauser L."/>
            <person name="Pelletier D.A."/>
            <person name="Kyrpides N."/>
            <person name="Anderson I."/>
            <person name="Oda Y."/>
            <person name="Harwood C.S."/>
            <person name="Richardson P."/>
        </authorList>
    </citation>
    <scope>NUCLEOTIDE SEQUENCE [LARGE SCALE GENOMIC DNA]</scope>
    <source>
        <strain>HaA2</strain>
    </source>
</reference>
<keyword id="KW-1185">Reference proteome</keyword>
<keyword id="KW-0687">Ribonucleoprotein</keyword>
<keyword id="KW-0689">Ribosomal protein</keyword>